<name>SYH_LACLS</name>
<feature type="chain" id="PRO_1000016381" description="Histidine--tRNA ligase">
    <location>
        <begin position="1"/>
        <end position="430"/>
    </location>
</feature>
<evidence type="ECO:0000255" key="1">
    <source>
        <dbReference type="HAMAP-Rule" id="MF_00127"/>
    </source>
</evidence>
<accession>Q02WI8</accession>
<sequence length="430" mass="48975">MKLQKPKGTADLLPAETAKWQYIEEIARGVFNDYNFKEIRTPMFESYELFSRATGETSDIVTKEMYDFEDKGGRHIALRPEGTASAVRAYIENKLYAPEVVKPVKLWYDAPMFRYERPQSGRLRQFHQFGVECLGLKNSAVDVEIIAMADTLFRQLGISGVKLSLNTLGDMESRKAYRQALIDYLTPFENQLSEDSRRRLNENPLRVLDSKEAEDIAIVKNAPAILDYLNETSKAYFEEVKALLEALNIEYTIDSNMVRGLDYYNDTIFEFIVNFDGKELTVCGGGRYDGLVEYFDGPATPAFGFGLGIERLLMIAEKQEINFIPEETLDVYIAVMGEKANLEATKLAESLREQAFKVERDFSNRKLGAQFKTAEKLGAELIITLGEDEVRTGQIKVKHNQTRKQVETTLKAVHESFAPIFEEIYADEIN</sequence>
<comment type="catalytic activity">
    <reaction evidence="1">
        <text>tRNA(His) + L-histidine + ATP = L-histidyl-tRNA(His) + AMP + diphosphate + H(+)</text>
        <dbReference type="Rhea" id="RHEA:17313"/>
        <dbReference type="Rhea" id="RHEA-COMP:9665"/>
        <dbReference type="Rhea" id="RHEA-COMP:9689"/>
        <dbReference type="ChEBI" id="CHEBI:15378"/>
        <dbReference type="ChEBI" id="CHEBI:30616"/>
        <dbReference type="ChEBI" id="CHEBI:33019"/>
        <dbReference type="ChEBI" id="CHEBI:57595"/>
        <dbReference type="ChEBI" id="CHEBI:78442"/>
        <dbReference type="ChEBI" id="CHEBI:78527"/>
        <dbReference type="ChEBI" id="CHEBI:456215"/>
        <dbReference type="EC" id="6.1.1.21"/>
    </reaction>
</comment>
<comment type="subunit">
    <text evidence="1">Homodimer.</text>
</comment>
<comment type="subcellular location">
    <subcellularLocation>
        <location evidence="1">Cytoplasm</location>
    </subcellularLocation>
</comment>
<comment type="similarity">
    <text evidence="1">Belongs to the class-II aminoacyl-tRNA synthetase family.</text>
</comment>
<protein>
    <recommendedName>
        <fullName evidence="1">Histidine--tRNA ligase</fullName>
        <ecNumber evidence="1">6.1.1.21</ecNumber>
    </recommendedName>
    <alternativeName>
        <fullName evidence="1">Histidyl-tRNA synthetase</fullName>
        <shortName evidence="1">HisRS</shortName>
    </alternativeName>
</protein>
<gene>
    <name evidence="1" type="primary">hisS</name>
    <name type="ordered locus">LACR_2228</name>
</gene>
<keyword id="KW-0030">Aminoacyl-tRNA synthetase</keyword>
<keyword id="KW-0067">ATP-binding</keyword>
<keyword id="KW-0963">Cytoplasm</keyword>
<keyword id="KW-0436">Ligase</keyword>
<keyword id="KW-0547">Nucleotide-binding</keyword>
<keyword id="KW-0648">Protein biosynthesis</keyword>
<reference key="1">
    <citation type="journal article" date="2006" name="Proc. Natl. Acad. Sci. U.S.A.">
        <title>Comparative genomics of the lactic acid bacteria.</title>
        <authorList>
            <person name="Makarova K.S."/>
            <person name="Slesarev A."/>
            <person name="Wolf Y.I."/>
            <person name="Sorokin A."/>
            <person name="Mirkin B."/>
            <person name="Koonin E.V."/>
            <person name="Pavlov A."/>
            <person name="Pavlova N."/>
            <person name="Karamychev V."/>
            <person name="Polouchine N."/>
            <person name="Shakhova V."/>
            <person name="Grigoriev I."/>
            <person name="Lou Y."/>
            <person name="Rohksar D."/>
            <person name="Lucas S."/>
            <person name="Huang K."/>
            <person name="Goodstein D.M."/>
            <person name="Hawkins T."/>
            <person name="Plengvidhya V."/>
            <person name="Welker D."/>
            <person name="Hughes J."/>
            <person name="Goh Y."/>
            <person name="Benson A."/>
            <person name="Baldwin K."/>
            <person name="Lee J.-H."/>
            <person name="Diaz-Muniz I."/>
            <person name="Dosti B."/>
            <person name="Smeianov V."/>
            <person name="Wechter W."/>
            <person name="Barabote R."/>
            <person name="Lorca G."/>
            <person name="Altermann E."/>
            <person name="Barrangou R."/>
            <person name="Ganesan B."/>
            <person name="Xie Y."/>
            <person name="Rawsthorne H."/>
            <person name="Tamir D."/>
            <person name="Parker C."/>
            <person name="Breidt F."/>
            <person name="Broadbent J.R."/>
            <person name="Hutkins R."/>
            <person name="O'Sullivan D."/>
            <person name="Steele J."/>
            <person name="Unlu G."/>
            <person name="Saier M.H. Jr."/>
            <person name="Klaenhammer T."/>
            <person name="Richardson P."/>
            <person name="Kozyavkin S."/>
            <person name="Weimer B.C."/>
            <person name="Mills D.A."/>
        </authorList>
    </citation>
    <scope>NUCLEOTIDE SEQUENCE [LARGE SCALE GENOMIC DNA]</scope>
    <source>
        <strain>SK11</strain>
    </source>
</reference>
<proteinExistence type="inferred from homology"/>
<dbReference type="EC" id="6.1.1.21" evidence="1"/>
<dbReference type="EMBL" id="CP000425">
    <property type="protein sequence ID" value="ABJ73684.1"/>
    <property type="molecule type" value="Genomic_DNA"/>
</dbReference>
<dbReference type="RefSeq" id="WP_011677019.1">
    <property type="nucleotide sequence ID" value="NC_008527.1"/>
</dbReference>
<dbReference type="SMR" id="Q02WI8"/>
<dbReference type="KEGG" id="llc:LACR_2228"/>
<dbReference type="HOGENOM" id="CLU_025113_1_1_9"/>
<dbReference type="Proteomes" id="UP000000240">
    <property type="component" value="Chromosome"/>
</dbReference>
<dbReference type="GO" id="GO:0005737">
    <property type="term" value="C:cytoplasm"/>
    <property type="evidence" value="ECO:0007669"/>
    <property type="project" value="UniProtKB-SubCell"/>
</dbReference>
<dbReference type="GO" id="GO:0005524">
    <property type="term" value="F:ATP binding"/>
    <property type="evidence" value="ECO:0007669"/>
    <property type="project" value="UniProtKB-UniRule"/>
</dbReference>
<dbReference type="GO" id="GO:0140096">
    <property type="term" value="F:catalytic activity, acting on a protein"/>
    <property type="evidence" value="ECO:0007669"/>
    <property type="project" value="UniProtKB-ARBA"/>
</dbReference>
<dbReference type="GO" id="GO:0004821">
    <property type="term" value="F:histidine-tRNA ligase activity"/>
    <property type="evidence" value="ECO:0007669"/>
    <property type="project" value="UniProtKB-UniRule"/>
</dbReference>
<dbReference type="GO" id="GO:0016740">
    <property type="term" value="F:transferase activity"/>
    <property type="evidence" value="ECO:0007669"/>
    <property type="project" value="UniProtKB-ARBA"/>
</dbReference>
<dbReference type="GO" id="GO:0006427">
    <property type="term" value="P:histidyl-tRNA aminoacylation"/>
    <property type="evidence" value="ECO:0007669"/>
    <property type="project" value="UniProtKB-UniRule"/>
</dbReference>
<dbReference type="CDD" id="cd00773">
    <property type="entry name" value="HisRS-like_core"/>
    <property type="match status" value="1"/>
</dbReference>
<dbReference type="CDD" id="cd00859">
    <property type="entry name" value="HisRS_anticodon"/>
    <property type="match status" value="1"/>
</dbReference>
<dbReference type="FunFam" id="3.30.930.10:FF:000005">
    <property type="entry name" value="Histidine--tRNA ligase"/>
    <property type="match status" value="1"/>
</dbReference>
<dbReference type="Gene3D" id="3.40.50.800">
    <property type="entry name" value="Anticodon-binding domain"/>
    <property type="match status" value="1"/>
</dbReference>
<dbReference type="Gene3D" id="3.30.930.10">
    <property type="entry name" value="Bira Bifunctional Protein, Domain 2"/>
    <property type="match status" value="1"/>
</dbReference>
<dbReference type="HAMAP" id="MF_00127">
    <property type="entry name" value="His_tRNA_synth"/>
    <property type="match status" value="1"/>
</dbReference>
<dbReference type="InterPro" id="IPR006195">
    <property type="entry name" value="aa-tRNA-synth_II"/>
</dbReference>
<dbReference type="InterPro" id="IPR045864">
    <property type="entry name" value="aa-tRNA-synth_II/BPL/LPL"/>
</dbReference>
<dbReference type="InterPro" id="IPR004154">
    <property type="entry name" value="Anticodon-bd"/>
</dbReference>
<dbReference type="InterPro" id="IPR036621">
    <property type="entry name" value="Anticodon-bd_dom_sf"/>
</dbReference>
<dbReference type="InterPro" id="IPR015807">
    <property type="entry name" value="His-tRNA-ligase"/>
</dbReference>
<dbReference type="InterPro" id="IPR041715">
    <property type="entry name" value="HisRS-like_core"/>
</dbReference>
<dbReference type="InterPro" id="IPR004516">
    <property type="entry name" value="HisRS/HisZ"/>
</dbReference>
<dbReference type="InterPro" id="IPR033656">
    <property type="entry name" value="HisRS_anticodon"/>
</dbReference>
<dbReference type="NCBIfam" id="TIGR00442">
    <property type="entry name" value="hisS"/>
    <property type="match status" value="1"/>
</dbReference>
<dbReference type="PANTHER" id="PTHR43707:SF1">
    <property type="entry name" value="HISTIDINE--TRNA LIGASE, MITOCHONDRIAL-RELATED"/>
    <property type="match status" value="1"/>
</dbReference>
<dbReference type="PANTHER" id="PTHR43707">
    <property type="entry name" value="HISTIDYL-TRNA SYNTHETASE"/>
    <property type="match status" value="1"/>
</dbReference>
<dbReference type="Pfam" id="PF03129">
    <property type="entry name" value="HGTP_anticodon"/>
    <property type="match status" value="1"/>
</dbReference>
<dbReference type="Pfam" id="PF13393">
    <property type="entry name" value="tRNA-synt_His"/>
    <property type="match status" value="1"/>
</dbReference>
<dbReference type="PIRSF" id="PIRSF001549">
    <property type="entry name" value="His-tRNA_synth"/>
    <property type="match status" value="1"/>
</dbReference>
<dbReference type="SUPFAM" id="SSF52954">
    <property type="entry name" value="Class II aaRS ABD-related"/>
    <property type="match status" value="1"/>
</dbReference>
<dbReference type="SUPFAM" id="SSF55681">
    <property type="entry name" value="Class II aaRS and biotin synthetases"/>
    <property type="match status" value="1"/>
</dbReference>
<dbReference type="PROSITE" id="PS50862">
    <property type="entry name" value="AA_TRNA_LIGASE_II"/>
    <property type="match status" value="1"/>
</dbReference>
<organism>
    <name type="scientific">Lactococcus lactis subsp. cremoris (strain SK11)</name>
    <dbReference type="NCBI Taxonomy" id="272622"/>
    <lineage>
        <taxon>Bacteria</taxon>
        <taxon>Bacillati</taxon>
        <taxon>Bacillota</taxon>
        <taxon>Bacilli</taxon>
        <taxon>Lactobacillales</taxon>
        <taxon>Streptococcaceae</taxon>
        <taxon>Lactococcus</taxon>
        <taxon>Lactococcus cremoris subsp. cremoris</taxon>
    </lineage>
</organism>